<protein>
    <recommendedName>
        <fullName>Vesicle-associated membrane protein 7</fullName>
        <shortName>VAMP-7</shortName>
    </recommendedName>
    <alternativeName>
        <fullName>Synaptobrevin-like protein 1</fullName>
    </alternativeName>
</protein>
<organism>
    <name type="scientific">Mus musculus</name>
    <name type="common">Mouse</name>
    <dbReference type="NCBI Taxonomy" id="10090"/>
    <lineage>
        <taxon>Eukaryota</taxon>
        <taxon>Metazoa</taxon>
        <taxon>Chordata</taxon>
        <taxon>Craniata</taxon>
        <taxon>Vertebrata</taxon>
        <taxon>Euteleostomi</taxon>
        <taxon>Mammalia</taxon>
        <taxon>Eutheria</taxon>
        <taxon>Euarchontoglires</taxon>
        <taxon>Glires</taxon>
        <taxon>Rodentia</taxon>
        <taxon>Myomorpha</taxon>
        <taxon>Muroidea</taxon>
        <taxon>Muridae</taxon>
        <taxon>Murinae</taxon>
        <taxon>Mus</taxon>
        <taxon>Mus</taxon>
    </lineage>
</organism>
<dbReference type="EMBL" id="X96737">
    <property type="protein sequence ID" value="CAA65509.1"/>
    <property type="molecule type" value="mRNA"/>
</dbReference>
<dbReference type="EMBL" id="AJ133536">
    <property type="protein sequence ID" value="CAB94231.1"/>
    <property type="molecule type" value="Genomic_DNA"/>
</dbReference>
<dbReference type="EMBL" id="AJ133537">
    <property type="protein sequence ID" value="CAB94231.1"/>
    <property type="status" value="JOINED"/>
    <property type="molecule type" value="Genomic_DNA"/>
</dbReference>
<dbReference type="EMBL" id="AJ133538">
    <property type="protein sequence ID" value="CAB94231.1"/>
    <property type="status" value="JOINED"/>
    <property type="molecule type" value="Genomic_DNA"/>
</dbReference>
<dbReference type="EMBL" id="AJ133539">
    <property type="protein sequence ID" value="CAB94231.1"/>
    <property type="status" value="JOINED"/>
    <property type="molecule type" value="Genomic_DNA"/>
</dbReference>
<dbReference type="EMBL" id="AJ133540">
    <property type="protein sequence ID" value="CAB94231.1"/>
    <property type="status" value="JOINED"/>
    <property type="molecule type" value="Genomic_DNA"/>
</dbReference>
<dbReference type="EMBL" id="AJ133541">
    <property type="protein sequence ID" value="CAB94231.1"/>
    <property type="status" value="JOINED"/>
    <property type="molecule type" value="Genomic_DNA"/>
</dbReference>
<dbReference type="EMBL" id="AJ133542">
    <property type="protein sequence ID" value="CAB94231.1"/>
    <property type="status" value="JOINED"/>
    <property type="molecule type" value="Genomic_DNA"/>
</dbReference>
<dbReference type="EMBL" id="AK002825">
    <property type="protein sequence ID" value="BAB22386.1"/>
    <property type="molecule type" value="mRNA"/>
</dbReference>
<dbReference type="EMBL" id="AK011510">
    <property type="protein sequence ID" value="BAB27667.1"/>
    <property type="molecule type" value="mRNA"/>
</dbReference>
<dbReference type="EMBL" id="AK089035">
    <property type="protein sequence ID" value="BAC40712.1"/>
    <property type="molecule type" value="mRNA"/>
</dbReference>
<dbReference type="EMBL" id="AK165299">
    <property type="protein sequence ID" value="BAE38126.1"/>
    <property type="molecule type" value="mRNA"/>
</dbReference>
<dbReference type="EMBL" id="BC003764">
    <property type="protein sequence ID" value="AAH03764.1"/>
    <property type="molecule type" value="mRNA"/>
</dbReference>
<dbReference type="RefSeq" id="NP_001289067.1">
    <property type="nucleotide sequence ID" value="NM_001302138.1"/>
</dbReference>
<dbReference type="RefSeq" id="NP_035645.1">
    <property type="nucleotide sequence ID" value="NM_011515.6"/>
</dbReference>
<dbReference type="PDB" id="2VX8">
    <property type="method" value="X-ray"/>
    <property type="resolution" value="2.20 A"/>
    <property type="chains" value="A/B/C/D=1-120"/>
</dbReference>
<dbReference type="PDB" id="4AFI">
    <property type="method" value="X-ray"/>
    <property type="resolution" value="2.80 A"/>
    <property type="chains" value="A/B=1-120"/>
</dbReference>
<dbReference type="PDB" id="4B93">
    <property type="method" value="X-ray"/>
    <property type="resolution" value="2.00 A"/>
    <property type="chains" value="A=1-187"/>
</dbReference>
<dbReference type="PDBsum" id="2VX8"/>
<dbReference type="PDBsum" id="4AFI"/>
<dbReference type="PDBsum" id="4B93"/>
<dbReference type="BMRB" id="P70280"/>
<dbReference type="SMR" id="P70280"/>
<dbReference type="BioGRID" id="203595">
    <property type="interactions" value="3"/>
</dbReference>
<dbReference type="CORUM" id="P70280"/>
<dbReference type="DIP" id="DIP-46794N"/>
<dbReference type="FunCoup" id="P70280">
    <property type="interactions" value="1389"/>
</dbReference>
<dbReference type="IntAct" id="P70280">
    <property type="interactions" value="12"/>
</dbReference>
<dbReference type="MINT" id="P70280"/>
<dbReference type="STRING" id="10090.ENSMUSP00000052262"/>
<dbReference type="TCDB" id="1.F.1.3.2">
    <property type="family name" value="the synaptosomal vesicle fusion pore (svf-pore) family"/>
</dbReference>
<dbReference type="iPTMnet" id="P70280"/>
<dbReference type="PhosphoSitePlus" id="P70280"/>
<dbReference type="SwissPalm" id="P70280"/>
<dbReference type="jPOST" id="P70280"/>
<dbReference type="PaxDb" id="10090-ENSMUSP00000052262"/>
<dbReference type="PeptideAtlas" id="P70280"/>
<dbReference type="ProteomicsDB" id="300113"/>
<dbReference type="Pumba" id="P70280"/>
<dbReference type="DNASU" id="20955"/>
<dbReference type="GeneID" id="20955"/>
<dbReference type="KEGG" id="mmu:20955"/>
<dbReference type="UCSC" id="uc009uym.2">
    <property type="organism name" value="mouse"/>
</dbReference>
<dbReference type="AGR" id="MGI:1096399"/>
<dbReference type="CTD" id="6845"/>
<dbReference type="MGI" id="MGI:1096399">
    <property type="gene designation" value="Vamp7"/>
</dbReference>
<dbReference type="VEuPathDB" id="HostDB:ENSMUSG00000051412"/>
<dbReference type="eggNOG" id="KOG0859">
    <property type="taxonomic scope" value="Eukaryota"/>
</dbReference>
<dbReference type="HOGENOM" id="CLU_064620_1_1_1"/>
<dbReference type="InParanoid" id="P70280"/>
<dbReference type="OrthoDB" id="248747at2759"/>
<dbReference type="PhylomeDB" id="P70280"/>
<dbReference type="TreeFam" id="TF323448"/>
<dbReference type="BioGRID-ORCS" id="20955">
    <property type="hits" value="0 hits in 17 CRISPR screens"/>
</dbReference>
<dbReference type="EvolutionaryTrace" id="P70280"/>
<dbReference type="PRO" id="PR:P70280"/>
<dbReference type="Proteomes" id="UP000000589">
    <property type="component" value="Unplaced"/>
</dbReference>
<dbReference type="RNAct" id="P70280">
    <property type="molecule type" value="protein"/>
</dbReference>
<dbReference type="GO" id="GO:0045177">
    <property type="term" value="C:apical part of cell"/>
    <property type="evidence" value="ECO:0000314"/>
    <property type="project" value="MGI"/>
</dbReference>
<dbReference type="GO" id="GO:0009986">
    <property type="term" value="C:cell surface"/>
    <property type="evidence" value="ECO:0000314"/>
    <property type="project" value="BHF-UCL"/>
</dbReference>
<dbReference type="GO" id="GO:0005789">
    <property type="term" value="C:endoplasmic reticulum membrane"/>
    <property type="evidence" value="ECO:0000250"/>
    <property type="project" value="UniProtKB"/>
</dbReference>
<dbReference type="GO" id="GO:0005794">
    <property type="term" value="C:Golgi apparatus"/>
    <property type="evidence" value="ECO:0000314"/>
    <property type="project" value="MGI"/>
</dbReference>
<dbReference type="GO" id="GO:0030027">
    <property type="term" value="C:lamellipodium"/>
    <property type="evidence" value="ECO:0000314"/>
    <property type="project" value="UniProtKB"/>
</dbReference>
<dbReference type="GO" id="GO:0031902">
    <property type="term" value="C:late endosome membrane"/>
    <property type="evidence" value="ECO:0000250"/>
    <property type="project" value="UniProtKB"/>
</dbReference>
<dbReference type="GO" id="GO:0005765">
    <property type="term" value="C:lysosomal membrane"/>
    <property type="evidence" value="ECO:0000250"/>
    <property type="project" value="UniProtKB"/>
</dbReference>
<dbReference type="GO" id="GO:0043005">
    <property type="term" value="C:neuron projection"/>
    <property type="evidence" value="ECO:0000314"/>
    <property type="project" value="UniProtKB"/>
</dbReference>
<dbReference type="GO" id="GO:0048471">
    <property type="term" value="C:perinuclear region of cytoplasm"/>
    <property type="evidence" value="ECO:0000314"/>
    <property type="project" value="MGI"/>
</dbReference>
<dbReference type="GO" id="GO:0045335">
    <property type="term" value="C:phagocytic vesicle"/>
    <property type="evidence" value="ECO:0000314"/>
    <property type="project" value="UniProtKB"/>
</dbReference>
<dbReference type="GO" id="GO:0030670">
    <property type="term" value="C:phagocytic vesicle membrane"/>
    <property type="evidence" value="ECO:0007669"/>
    <property type="project" value="UniProtKB-SubCell"/>
</dbReference>
<dbReference type="GO" id="GO:0031143">
    <property type="term" value="C:pseudopodium"/>
    <property type="evidence" value="ECO:0000314"/>
    <property type="project" value="UniProtKB"/>
</dbReference>
<dbReference type="GO" id="GO:0031201">
    <property type="term" value="C:SNARE complex"/>
    <property type="evidence" value="ECO:0000250"/>
    <property type="project" value="UniProtKB"/>
</dbReference>
<dbReference type="GO" id="GO:0045202">
    <property type="term" value="C:synapse"/>
    <property type="evidence" value="ECO:0007669"/>
    <property type="project" value="UniProtKB-SubCell"/>
</dbReference>
<dbReference type="GO" id="GO:0030133">
    <property type="term" value="C:transport vesicle"/>
    <property type="evidence" value="ECO:0000314"/>
    <property type="project" value="UniProtKB"/>
</dbReference>
<dbReference type="GO" id="GO:0030658">
    <property type="term" value="C:transport vesicle membrane"/>
    <property type="evidence" value="ECO:0007669"/>
    <property type="project" value="UniProtKB-SubCell"/>
</dbReference>
<dbReference type="GO" id="GO:0017156">
    <property type="term" value="P:calcium-ion regulated exocytosis"/>
    <property type="evidence" value="ECO:0000250"/>
    <property type="project" value="UniProtKB"/>
</dbReference>
<dbReference type="GO" id="GO:0006888">
    <property type="term" value="P:endoplasmic reticulum to Golgi vesicle-mediated transport"/>
    <property type="evidence" value="ECO:0000250"/>
    <property type="project" value="UniProtKB"/>
</dbReference>
<dbReference type="GO" id="GO:0008333">
    <property type="term" value="P:endosome to lysosome transport"/>
    <property type="evidence" value="ECO:0000250"/>
    <property type="project" value="UniProtKB"/>
</dbReference>
<dbReference type="GO" id="GO:0043308">
    <property type="term" value="P:eosinophil degranulation"/>
    <property type="evidence" value="ECO:0000250"/>
    <property type="project" value="UniProtKB"/>
</dbReference>
<dbReference type="GO" id="GO:0043001">
    <property type="term" value="P:Golgi to plasma membrane protein transport"/>
    <property type="evidence" value="ECO:0000315"/>
    <property type="project" value="MGI"/>
</dbReference>
<dbReference type="GO" id="GO:0043312">
    <property type="term" value="P:neutrophil degranulation"/>
    <property type="evidence" value="ECO:0000250"/>
    <property type="project" value="UniProtKB"/>
</dbReference>
<dbReference type="GO" id="GO:0006911">
    <property type="term" value="P:phagocytosis, engulfment"/>
    <property type="evidence" value="ECO:0000250"/>
    <property type="project" value="UniProtKB"/>
</dbReference>
<dbReference type="GO" id="GO:0050775">
    <property type="term" value="P:positive regulation of dendrite morphogenesis"/>
    <property type="evidence" value="ECO:0000315"/>
    <property type="project" value="UniProtKB"/>
</dbReference>
<dbReference type="GO" id="GO:1900483">
    <property type="term" value="P:regulation of protein targeting to vacuolar membrane"/>
    <property type="evidence" value="ECO:0000315"/>
    <property type="project" value="MGI"/>
</dbReference>
<dbReference type="GO" id="GO:0035493">
    <property type="term" value="P:SNARE complex assembly"/>
    <property type="evidence" value="ECO:0000314"/>
    <property type="project" value="BHF-UCL"/>
</dbReference>
<dbReference type="GO" id="GO:0006906">
    <property type="term" value="P:vesicle fusion"/>
    <property type="evidence" value="ECO:0000250"/>
    <property type="project" value="UniProtKB"/>
</dbReference>
<dbReference type="GO" id="GO:0016192">
    <property type="term" value="P:vesicle-mediated transport"/>
    <property type="evidence" value="ECO:0000250"/>
    <property type="project" value="UniProtKB"/>
</dbReference>
<dbReference type="CDD" id="cd14824">
    <property type="entry name" value="Longin"/>
    <property type="match status" value="1"/>
</dbReference>
<dbReference type="CDD" id="cd15871">
    <property type="entry name" value="R-SNARE_VAMP7"/>
    <property type="match status" value="1"/>
</dbReference>
<dbReference type="DisProt" id="DP02602"/>
<dbReference type="FunFam" id="1.20.5.110:FF:000004">
    <property type="entry name" value="Vesicle-associated membrane protein 7"/>
    <property type="match status" value="1"/>
</dbReference>
<dbReference type="FunFam" id="3.30.450.50:FF:000006">
    <property type="entry name" value="Vesicle-associated membrane protein 7"/>
    <property type="match status" value="1"/>
</dbReference>
<dbReference type="Gene3D" id="1.20.5.110">
    <property type="match status" value="1"/>
</dbReference>
<dbReference type="Gene3D" id="3.30.450.50">
    <property type="entry name" value="Longin domain"/>
    <property type="match status" value="1"/>
</dbReference>
<dbReference type="InterPro" id="IPR011012">
    <property type="entry name" value="Longin-like_dom_sf"/>
</dbReference>
<dbReference type="InterPro" id="IPR010908">
    <property type="entry name" value="Longin_dom"/>
</dbReference>
<dbReference type="InterPro" id="IPR001388">
    <property type="entry name" value="Synaptobrevin-like"/>
</dbReference>
<dbReference type="InterPro" id="IPR051097">
    <property type="entry name" value="Synaptobrevin-like_transport"/>
</dbReference>
<dbReference type="InterPro" id="IPR042855">
    <property type="entry name" value="V_SNARE_CC"/>
</dbReference>
<dbReference type="PANTHER" id="PTHR21136">
    <property type="entry name" value="SNARE PROTEINS"/>
    <property type="match status" value="1"/>
</dbReference>
<dbReference type="PANTHER" id="PTHR21136:SF196">
    <property type="entry name" value="VESICLE-ASSOCIATED MEMBRANE PROTEIN 7"/>
    <property type="match status" value="1"/>
</dbReference>
<dbReference type="Pfam" id="PF13774">
    <property type="entry name" value="Longin"/>
    <property type="match status" value="1"/>
</dbReference>
<dbReference type="Pfam" id="PF00957">
    <property type="entry name" value="Synaptobrevin"/>
    <property type="match status" value="1"/>
</dbReference>
<dbReference type="PRINTS" id="PR00219">
    <property type="entry name" value="SYNAPTOBREVN"/>
</dbReference>
<dbReference type="SMART" id="SM01270">
    <property type="entry name" value="Longin"/>
    <property type="match status" value="1"/>
</dbReference>
<dbReference type="SUPFAM" id="SSF58038">
    <property type="entry name" value="SNARE fusion complex"/>
    <property type="match status" value="1"/>
</dbReference>
<dbReference type="SUPFAM" id="SSF64356">
    <property type="entry name" value="SNARE-like"/>
    <property type="match status" value="1"/>
</dbReference>
<dbReference type="PROSITE" id="PS50859">
    <property type="entry name" value="LONGIN"/>
    <property type="match status" value="1"/>
</dbReference>
<dbReference type="PROSITE" id="PS00417">
    <property type="entry name" value="SYNAPTOBREVIN"/>
    <property type="match status" value="1"/>
</dbReference>
<dbReference type="PROSITE" id="PS50892">
    <property type="entry name" value="V_SNARE"/>
    <property type="match status" value="1"/>
</dbReference>
<proteinExistence type="evidence at protein level"/>
<keyword id="KW-0002">3D-structure</keyword>
<keyword id="KW-0007">Acetylation</keyword>
<keyword id="KW-0175">Coiled coil</keyword>
<keyword id="KW-0968">Cytoplasmic vesicle</keyword>
<keyword id="KW-0256">Endoplasmic reticulum</keyword>
<keyword id="KW-0967">Endosome</keyword>
<keyword id="KW-0268">Exocytosis</keyword>
<keyword id="KW-0333">Golgi apparatus</keyword>
<keyword id="KW-0458">Lysosome</keyword>
<keyword id="KW-0472">Membrane</keyword>
<keyword id="KW-0597">Phosphoprotein</keyword>
<keyword id="KW-0653">Protein transport</keyword>
<keyword id="KW-1185">Reference proteome</keyword>
<keyword id="KW-0735">Signal-anchor</keyword>
<keyword id="KW-0770">Synapse</keyword>
<keyword id="KW-0771">Synaptosome</keyword>
<keyword id="KW-0812">Transmembrane</keyword>
<keyword id="KW-1133">Transmembrane helix</keyword>
<keyword id="KW-0813">Transport</keyword>
<accession>P70280</accession>
<name>VAMP7_MOUSE</name>
<evidence type="ECO:0000250" key="1"/>
<evidence type="ECO:0000250" key="2">
    <source>
        <dbReference type="UniProtKB" id="P51809"/>
    </source>
</evidence>
<evidence type="ECO:0000255" key="3"/>
<evidence type="ECO:0000255" key="4">
    <source>
        <dbReference type="PROSITE-ProRule" id="PRU00231"/>
    </source>
</evidence>
<evidence type="ECO:0000255" key="5">
    <source>
        <dbReference type="PROSITE-ProRule" id="PRU00290"/>
    </source>
</evidence>
<evidence type="ECO:0000269" key="6">
    <source>
    </source>
</evidence>
<evidence type="ECO:0000305" key="7"/>
<evidence type="ECO:0007744" key="8">
    <source>
    </source>
</evidence>
<evidence type="ECO:0007829" key="9">
    <source>
        <dbReference type="PDB" id="4B93"/>
    </source>
</evidence>
<feature type="initiator methionine" description="Removed" evidence="2">
    <location>
        <position position="1"/>
    </location>
</feature>
<feature type="chain" id="PRO_0000316087" description="Vesicle-associated membrane protein 7">
    <location>
        <begin position="2"/>
        <end position="220"/>
    </location>
</feature>
<feature type="topological domain" description="Cytoplasmic" evidence="3">
    <location>
        <begin position="2"/>
        <end position="188"/>
    </location>
</feature>
<feature type="transmembrane region" description="Helical; Anchor for type IV membrane protein" evidence="3">
    <location>
        <begin position="189"/>
        <end position="209"/>
    </location>
</feature>
<feature type="topological domain" description="Vesicular" evidence="3">
    <location>
        <begin position="210"/>
        <end position="220"/>
    </location>
</feature>
<feature type="domain" description="Longin" evidence="4">
    <location>
        <begin position="7"/>
        <end position="110"/>
    </location>
</feature>
<feature type="domain" description="v-SNARE coiled-coil homology" evidence="5">
    <location>
        <begin position="125"/>
        <end position="185"/>
    </location>
</feature>
<feature type="modified residue" description="N-acetylalanine" evidence="2">
    <location>
        <position position="2"/>
    </location>
</feature>
<feature type="modified residue" description="Phosphoserine" evidence="2">
    <location>
        <position position="167"/>
    </location>
</feature>
<feature type="modified residue" description="Phosphoserine" evidence="8">
    <location>
        <position position="168"/>
    </location>
</feature>
<feature type="strand" evidence="9">
    <location>
        <begin position="2"/>
        <end position="10"/>
    </location>
</feature>
<feature type="strand" evidence="9">
    <location>
        <begin position="13"/>
        <end position="23"/>
    </location>
</feature>
<feature type="helix" evidence="9">
    <location>
        <begin position="25"/>
        <end position="33"/>
    </location>
</feature>
<feature type="strand" evidence="9">
    <location>
        <begin position="38"/>
        <end position="47"/>
    </location>
</feature>
<feature type="strand" evidence="9">
    <location>
        <begin position="50"/>
        <end position="57"/>
    </location>
</feature>
<feature type="strand" evidence="9">
    <location>
        <begin position="60"/>
        <end position="67"/>
    </location>
</feature>
<feature type="helix" evidence="9">
    <location>
        <begin position="72"/>
        <end position="90"/>
    </location>
</feature>
<feature type="helix" evidence="9">
    <location>
        <begin position="91"/>
        <end position="95"/>
    </location>
</feature>
<feature type="turn" evidence="9">
    <location>
        <begin position="99"/>
        <end position="102"/>
    </location>
</feature>
<feature type="helix" evidence="9">
    <location>
        <begin position="103"/>
        <end position="118"/>
    </location>
</feature>
<feature type="helix" evidence="9">
    <location>
        <begin position="130"/>
        <end position="134"/>
    </location>
</feature>
<feature type="turn" evidence="9">
    <location>
        <begin position="135"/>
        <end position="138"/>
    </location>
</feature>
<feature type="strand" evidence="9">
    <location>
        <begin position="151"/>
        <end position="153"/>
    </location>
</feature>
<comment type="function">
    <text evidence="6">Involved in the targeting and/or fusion of transport vesicles to their target membrane during transport of proteins from the early endosome to the lysosome. Required for heterotypic fusion of late endosomes with lysosomes and homotypic lysosomal fusion. Required for calcium regulated lysosomal exocytosis. Involved in the export of chylomicrons from the endoplasmic reticulum to the cis Golgi. Required for exocytosis of mediators during eosinophil and neutrophil degranulation, and target cell killing by natural killer cells. Required for focal exocytosis of late endocytic vesicles during phagosome formation.</text>
</comment>
<comment type="subunit">
    <text evidence="1 2">Component of the SNARE complex composed of STX4, SNAP23 and VAMP7 that binds SYT7 during lysosomal exocytosis. Component of the SNARE complex composed of STX7, STX8, VAMP7 and VTI1B that is required for heterotypic fusion of late endosomes with lysosomes (By similarity). May interact with STX17. Interacts with PICALM (By similarity). Interacts with RAB21 (By similarity).</text>
</comment>
<comment type="interaction">
    <interactant intactId="EBI-6555653">
        <id>P70280</id>
    </interactant>
    <interactant intactId="EBI-775853">
        <id>O88384</id>
        <label>Vti1b</label>
    </interactant>
    <organismsDiffer>false</organismsDiffer>
    <experiments>9</experiments>
</comment>
<comment type="interaction">
    <interactant intactId="EBI-6555653">
        <id>P70280</id>
    </interactant>
    <interactant intactId="EBI-6125599">
        <id>Q96NW4</id>
        <label>ANKRD27</label>
    </interactant>
    <organismsDiffer>true</organismsDiffer>
    <experiments>13</experiments>
</comment>
<comment type="interaction">
    <interactant intactId="EBI-6555653">
        <id>P70280</id>
    </interactant>
    <interactant intactId="EBI-2797775">
        <id>P56962</id>
        <label>STX17</label>
    </interactant>
    <organismsDiffer>true</organismsDiffer>
    <experiments>2</experiments>
</comment>
<comment type="subcellular location">
    <subcellularLocation>
        <location>Cytoplasmic vesicle</location>
        <location>Secretory vesicle membrane</location>
        <topology>Single-pass type IV membrane protein</topology>
    </subcellularLocation>
    <subcellularLocation>
        <location evidence="1">Golgi apparatus</location>
        <location evidence="1">trans-Golgi network membrane</location>
        <topology evidence="1">Single-pass type IV membrane protein</topology>
    </subcellularLocation>
    <subcellularLocation>
        <location>Late endosome membrane</location>
        <topology>Single-pass type IV membrane protein</topology>
    </subcellularLocation>
    <subcellularLocation>
        <location>Lysosome membrane</location>
        <topology>Single-pass type IV membrane protein</topology>
    </subcellularLocation>
    <subcellularLocation>
        <location evidence="1">Endoplasmic reticulum membrane</location>
        <topology evidence="1">Single-pass type IV membrane protein</topology>
    </subcellularLocation>
    <subcellularLocation>
        <location>Cytoplasmic vesicle</location>
        <location>Phagosome membrane</location>
        <topology>Single-pass type IV membrane protein</topology>
    </subcellularLocation>
    <subcellularLocation>
        <location>Synapse</location>
        <location>Synaptosome</location>
    </subcellularLocation>
    <text evidence="1">In immature neurons expression is localized in vesicular structures in axons and dendrites while in mature neurons it is localized to the somatodendritic region. Colocalizes with LAMP1 in kidney cells. Localization to the endoplasmic reticulum membrane was observed in the intestine but not in liver or kidney (By similarity).</text>
</comment>
<comment type="miscellaneous">
    <text>Loss-of-function mutant (antisense inhibition) displays impaired receptor-mediated phagocytosis.</text>
</comment>
<comment type="similarity">
    <text evidence="7">Belongs to the synaptobrevin family.</text>
</comment>
<reference key="1">
    <citation type="journal article" date="1997" name="Hum. Mol. Genet.">
        <title>Differential expression pattern of XqPAR-linked genes SYBL1 and IL9R correlates with the structure and evolution of the region.</title>
        <authorList>
            <person name="D'Esposito M."/>
            <person name="Matarazzo M.R."/>
            <person name="Ciccodicola A."/>
            <person name="Strazzullo M."/>
            <person name="Mazzarella R."/>
            <person name="Quaderi N.A."/>
            <person name="Fujiwara H."/>
            <person name="Ko M.S."/>
            <person name="Rowe L.B."/>
            <person name="Ricco A."/>
            <person name="Archidiacono N."/>
            <person name="Rocchi M."/>
            <person name="Schlessinger D."/>
            <person name="D'Urso M."/>
        </authorList>
    </citation>
    <scope>NUCLEOTIDE SEQUENCE [MRNA]</scope>
</reference>
<reference key="2">
    <citation type="journal article" date="1999" name="Gene">
        <title>Human and mouse SYBL1 gene structure and expression.</title>
        <authorList>
            <person name="Matarazzo M.R."/>
            <person name="Cuccurese M."/>
            <person name="Strazzullo M."/>
            <person name="Vacca M."/>
            <person name="Curci A."/>
            <person name="Miano M.G."/>
            <person name="Cocchia M."/>
            <person name="Mercadante G."/>
            <person name="Torino A."/>
            <person name="D'Urso M."/>
            <person name="Ciccodicola A."/>
            <person name="D'Esposito M."/>
        </authorList>
    </citation>
    <scope>NUCLEOTIDE SEQUENCE [GENOMIC DNA]</scope>
    <source>
        <strain>129</strain>
    </source>
</reference>
<reference key="3">
    <citation type="journal article" date="2005" name="Science">
        <title>The transcriptional landscape of the mammalian genome.</title>
        <authorList>
            <person name="Carninci P."/>
            <person name="Kasukawa T."/>
            <person name="Katayama S."/>
            <person name="Gough J."/>
            <person name="Frith M.C."/>
            <person name="Maeda N."/>
            <person name="Oyama R."/>
            <person name="Ravasi T."/>
            <person name="Lenhard B."/>
            <person name="Wells C."/>
            <person name="Kodzius R."/>
            <person name="Shimokawa K."/>
            <person name="Bajic V.B."/>
            <person name="Brenner S.E."/>
            <person name="Batalov S."/>
            <person name="Forrest A.R."/>
            <person name="Zavolan M."/>
            <person name="Davis M.J."/>
            <person name="Wilming L.G."/>
            <person name="Aidinis V."/>
            <person name="Allen J.E."/>
            <person name="Ambesi-Impiombato A."/>
            <person name="Apweiler R."/>
            <person name="Aturaliya R.N."/>
            <person name="Bailey T.L."/>
            <person name="Bansal M."/>
            <person name="Baxter L."/>
            <person name="Beisel K.W."/>
            <person name="Bersano T."/>
            <person name="Bono H."/>
            <person name="Chalk A.M."/>
            <person name="Chiu K.P."/>
            <person name="Choudhary V."/>
            <person name="Christoffels A."/>
            <person name="Clutterbuck D.R."/>
            <person name="Crowe M.L."/>
            <person name="Dalla E."/>
            <person name="Dalrymple B.P."/>
            <person name="de Bono B."/>
            <person name="Della Gatta G."/>
            <person name="di Bernardo D."/>
            <person name="Down T."/>
            <person name="Engstrom P."/>
            <person name="Fagiolini M."/>
            <person name="Faulkner G."/>
            <person name="Fletcher C.F."/>
            <person name="Fukushima T."/>
            <person name="Furuno M."/>
            <person name="Futaki S."/>
            <person name="Gariboldi M."/>
            <person name="Georgii-Hemming P."/>
            <person name="Gingeras T.R."/>
            <person name="Gojobori T."/>
            <person name="Green R.E."/>
            <person name="Gustincich S."/>
            <person name="Harbers M."/>
            <person name="Hayashi Y."/>
            <person name="Hensch T.K."/>
            <person name="Hirokawa N."/>
            <person name="Hill D."/>
            <person name="Huminiecki L."/>
            <person name="Iacono M."/>
            <person name="Ikeo K."/>
            <person name="Iwama A."/>
            <person name="Ishikawa T."/>
            <person name="Jakt M."/>
            <person name="Kanapin A."/>
            <person name="Katoh M."/>
            <person name="Kawasawa Y."/>
            <person name="Kelso J."/>
            <person name="Kitamura H."/>
            <person name="Kitano H."/>
            <person name="Kollias G."/>
            <person name="Krishnan S.P."/>
            <person name="Kruger A."/>
            <person name="Kummerfeld S.K."/>
            <person name="Kurochkin I.V."/>
            <person name="Lareau L.F."/>
            <person name="Lazarevic D."/>
            <person name="Lipovich L."/>
            <person name="Liu J."/>
            <person name="Liuni S."/>
            <person name="McWilliam S."/>
            <person name="Madan Babu M."/>
            <person name="Madera M."/>
            <person name="Marchionni L."/>
            <person name="Matsuda H."/>
            <person name="Matsuzawa S."/>
            <person name="Miki H."/>
            <person name="Mignone F."/>
            <person name="Miyake S."/>
            <person name="Morris K."/>
            <person name="Mottagui-Tabar S."/>
            <person name="Mulder N."/>
            <person name="Nakano N."/>
            <person name="Nakauchi H."/>
            <person name="Ng P."/>
            <person name="Nilsson R."/>
            <person name="Nishiguchi S."/>
            <person name="Nishikawa S."/>
            <person name="Nori F."/>
            <person name="Ohara O."/>
            <person name="Okazaki Y."/>
            <person name="Orlando V."/>
            <person name="Pang K.C."/>
            <person name="Pavan W.J."/>
            <person name="Pavesi G."/>
            <person name="Pesole G."/>
            <person name="Petrovsky N."/>
            <person name="Piazza S."/>
            <person name="Reed J."/>
            <person name="Reid J.F."/>
            <person name="Ring B.Z."/>
            <person name="Ringwald M."/>
            <person name="Rost B."/>
            <person name="Ruan Y."/>
            <person name="Salzberg S.L."/>
            <person name="Sandelin A."/>
            <person name="Schneider C."/>
            <person name="Schoenbach C."/>
            <person name="Sekiguchi K."/>
            <person name="Semple C.A."/>
            <person name="Seno S."/>
            <person name="Sessa L."/>
            <person name="Sheng Y."/>
            <person name="Shibata Y."/>
            <person name="Shimada H."/>
            <person name="Shimada K."/>
            <person name="Silva D."/>
            <person name="Sinclair B."/>
            <person name="Sperling S."/>
            <person name="Stupka E."/>
            <person name="Sugiura K."/>
            <person name="Sultana R."/>
            <person name="Takenaka Y."/>
            <person name="Taki K."/>
            <person name="Tammoja K."/>
            <person name="Tan S.L."/>
            <person name="Tang S."/>
            <person name="Taylor M.S."/>
            <person name="Tegner J."/>
            <person name="Teichmann S.A."/>
            <person name="Ueda H.R."/>
            <person name="van Nimwegen E."/>
            <person name="Verardo R."/>
            <person name="Wei C.L."/>
            <person name="Yagi K."/>
            <person name="Yamanishi H."/>
            <person name="Zabarovsky E."/>
            <person name="Zhu S."/>
            <person name="Zimmer A."/>
            <person name="Hide W."/>
            <person name="Bult C."/>
            <person name="Grimmond S.M."/>
            <person name="Teasdale R.D."/>
            <person name="Liu E.T."/>
            <person name="Brusic V."/>
            <person name="Quackenbush J."/>
            <person name="Wahlestedt C."/>
            <person name="Mattick J.S."/>
            <person name="Hume D.A."/>
            <person name="Kai C."/>
            <person name="Sasaki D."/>
            <person name="Tomaru Y."/>
            <person name="Fukuda S."/>
            <person name="Kanamori-Katayama M."/>
            <person name="Suzuki M."/>
            <person name="Aoki J."/>
            <person name="Arakawa T."/>
            <person name="Iida J."/>
            <person name="Imamura K."/>
            <person name="Itoh M."/>
            <person name="Kato T."/>
            <person name="Kawaji H."/>
            <person name="Kawagashira N."/>
            <person name="Kawashima T."/>
            <person name="Kojima M."/>
            <person name="Kondo S."/>
            <person name="Konno H."/>
            <person name="Nakano K."/>
            <person name="Ninomiya N."/>
            <person name="Nishio T."/>
            <person name="Okada M."/>
            <person name="Plessy C."/>
            <person name="Shibata K."/>
            <person name="Shiraki T."/>
            <person name="Suzuki S."/>
            <person name="Tagami M."/>
            <person name="Waki K."/>
            <person name="Watahiki A."/>
            <person name="Okamura-Oho Y."/>
            <person name="Suzuki H."/>
            <person name="Kawai J."/>
            <person name="Hayashizaki Y."/>
        </authorList>
    </citation>
    <scope>NUCLEOTIDE SEQUENCE [LARGE SCALE MRNA]</scope>
    <source>
        <strain>C57BL/6J</strain>
        <strain>NOD</strain>
        <tissue>Embryo</tissue>
        <tissue>Kidney</tissue>
        <tissue>Spleen</tissue>
        <tissue>Thymus</tissue>
    </source>
</reference>
<reference key="4">
    <citation type="journal article" date="2004" name="Genome Res.">
        <title>The status, quality, and expansion of the NIH full-length cDNA project: the Mammalian Gene Collection (MGC).</title>
        <authorList>
            <consortium name="The MGC Project Team"/>
        </authorList>
    </citation>
    <scope>NUCLEOTIDE SEQUENCE [LARGE SCALE MRNA]</scope>
    <source>
        <strain>FVB/N</strain>
        <tissue>Mammary tumor</tissue>
    </source>
</reference>
<reference key="5">
    <citation type="journal article" date="2004" name="EMBO J.">
        <title>TI-VAMP/VAMP7 is required for optimal phagocytosis of opsonised particles in macrophages.</title>
        <authorList>
            <person name="Braun V."/>
            <person name="Fraisier V."/>
            <person name="Raposo G."/>
            <person name="Hurbain I."/>
            <person name="Sibarita J.-B."/>
            <person name="Chavrier P."/>
            <person name="Galli T."/>
            <person name="Niedergang F."/>
        </authorList>
    </citation>
    <scope>FUNCTION</scope>
    <scope>SUBCELLULAR LOCATION</scope>
</reference>
<reference key="6">
    <citation type="journal article" date="2009" name="Immunity">
        <title>The phagosomal proteome in interferon-gamma-activated macrophages.</title>
        <authorList>
            <person name="Trost M."/>
            <person name="English L."/>
            <person name="Lemieux S."/>
            <person name="Courcelles M."/>
            <person name="Desjardins M."/>
            <person name="Thibault P."/>
        </authorList>
    </citation>
    <scope>PHOSPHORYLATION [LARGE SCALE ANALYSIS] AT SER-168</scope>
    <scope>IDENTIFICATION BY MASS SPECTROMETRY [LARGE SCALE ANALYSIS]</scope>
</reference>
<reference key="7">
    <citation type="journal article" date="2010" name="Cell">
        <title>A tissue-specific atlas of mouse protein phosphorylation and expression.</title>
        <authorList>
            <person name="Huttlin E.L."/>
            <person name="Jedrychowski M.P."/>
            <person name="Elias J.E."/>
            <person name="Goswami T."/>
            <person name="Rad R."/>
            <person name="Beausoleil S.A."/>
            <person name="Villen J."/>
            <person name="Haas W."/>
            <person name="Sowa M.E."/>
            <person name="Gygi S.P."/>
        </authorList>
    </citation>
    <scope>IDENTIFICATION BY MASS SPECTROMETRY [LARGE SCALE ANALYSIS]</scope>
    <source>
        <tissue>Brain</tissue>
        <tissue>Kidney</tissue>
        <tissue>Liver</tissue>
        <tissue>Lung</tissue>
        <tissue>Spleen</tissue>
        <tissue>Testis</tissue>
    </source>
</reference>
<reference key="8">
    <citation type="journal article" date="2011" name="Mol. Biol. Cell">
        <title>The schizophrenia susceptibility factor dysbindin and its associated complex sort cargoes from cell bodies to the synapse.</title>
        <authorList>
            <person name="Larimore J."/>
            <person name="Tornieri K."/>
            <person name="Ryder P.V."/>
            <person name="Gokhale A."/>
            <person name="Zlatic S.A."/>
            <person name="Craige B."/>
            <person name="Lee J.D."/>
            <person name="Talbot K."/>
            <person name="Pare J.F."/>
            <person name="Smith Y."/>
            <person name="Faundez V."/>
        </authorList>
    </citation>
    <scope>SUBCELLULAR LOCATION</scope>
</reference>
<reference key="9">
    <citation type="journal article" date="2012" name="Cell">
        <title>The hairpin-type tail-anchored SNARE syntaxin 17 targets to autophagosomes for fusion with endosomes/lysosomes.</title>
        <authorList>
            <person name="Itakura E."/>
            <person name="Kishi-Itakura C."/>
            <person name="Mizushima N."/>
        </authorList>
    </citation>
    <scope>INTERACTION WITH STX17</scope>
</reference>
<gene>
    <name type="primary">Vamp7</name>
    <name type="synonym">Sybl1</name>
</gene>
<sequence>MAILFAVVARGTTILAKHAWCGGNFLEVTEQILAKIPSENNKLTYSHGNYLFHYICQDRIVYLCITDDDFERSRAFSFLNEVKKRFQTTYGSRAQTALPYAMNSEFSSVLAAQLKHHSENKSLDKVMETQAQVDELKGIMVRNIDLVAQRGERLELLIDKTENLVDSSVTFKTTSRNLARAMCMKNIKLTIIIIIVSIVFIYIIVSLLCGGFTWPNCVKK</sequence>